<protein>
    <recommendedName>
        <fullName evidence="1">tRNA modification GTPase MnmE</fullName>
        <ecNumber evidence="1">3.6.-.-</ecNumber>
    </recommendedName>
</protein>
<name>MNME_EHRRW</name>
<accession>Q5HCD7</accession>
<accession>Q5FCJ7</accession>
<reference key="1">
    <citation type="journal article" date="2005" name="Proc. Natl. Acad. Sci. U.S.A.">
        <title>The genome of the heartwater agent Ehrlichia ruminantium contains multiple tandem repeats of actively variable copy number.</title>
        <authorList>
            <person name="Collins N.E."/>
            <person name="Liebenberg J."/>
            <person name="de Villiers E.P."/>
            <person name="Brayton K.A."/>
            <person name="Louw E."/>
            <person name="Pretorius A."/>
            <person name="Faber F.E."/>
            <person name="van Heerden H."/>
            <person name="Josemans A."/>
            <person name="van Kleef M."/>
            <person name="Steyn H.C."/>
            <person name="van Strijp M.F."/>
            <person name="Zweygarth E."/>
            <person name="Jongejan F."/>
            <person name="Maillard J.C."/>
            <person name="Berthier D."/>
            <person name="Botha M."/>
            <person name="Joubert F."/>
            <person name="Corton C.H."/>
            <person name="Thomson N.R."/>
            <person name="Allsopp M.T."/>
            <person name="Allsopp B.A."/>
        </authorList>
    </citation>
    <scope>NUCLEOTIDE SEQUENCE [LARGE SCALE GENOMIC DNA]</scope>
    <source>
        <strain>Welgevonden</strain>
    </source>
</reference>
<reference key="2">
    <citation type="journal article" date="2006" name="J. Bacteriol.">
        <title>Comparative genomic analysis of three strains of Ehrlichia ruminantium reveals an active process of genome size plasticity.</title>
        <authorList>
            <person name="Frutos R."/>
            <person name="Viari A."/>
            <person name="Ferraz C."/>
            <person name="Morgat A."/>
            <person name="Eychenie S."/>
            <person name="Kandassamy Y."/>
            <person name="Chantal I."/>
            <person name="Bensaid A."/>
            <person name="Coissac E."/>
            <person name="Vachiery N."/>
            <person name="Demaille J."/>
            <person name="Martinez D."/>
        </authorList>
    </citation>
    <scope>NUCLEOTIDE SEQUENCE [LARGE SCALE GENOMIC DNA]</scope>
    <source>
        <strain>Welgevonden</strain>
    </source>
</reference>
<evidence type="ECO:0000255" key="1">
    <source>
        <dbReference type="HAMAP-Rule" id="MF_00379"/>
    </source>
</evidence>
<proteinExistence type="inferred from homology"/>
<gene>
    <name evidence="1" type="primary">mnmE</name>
    <name evidence="1" type="synonym">trmE</name>
    <name type="ordered locus">Erum0400</name>
    <name type="ordered locus">ERWE_CDS_00290</name>
</gene>
<organism>
    <name type="scientific">Ehrlichia ruminantium (strain Welgevonden)</name>
    <dbReference type="NCBI Taxonomy" id="254945"/>
    <lineage>
        <taxon>Bacteria</taxon>
        <taxon>Pseudomonadati</taxon>
        <taxon>Pseudomonadota</taxon>
        <taxon>Alphaproteobacteria</taxon>
        <taxon>Rickettsiales</taxon>
        <taxon>Anaplasmataceae</taxon>
        <taxon>Ehrlichia</taxon>
    </lineage>
</organism>
<feature type="chain" id="PRO_0000345780" description="tRNA modification GTPase MnmE">
    <location>
        <begin position="1"/>
        <end position="439"/>
    </location>
</feature>
<feature type="domain" description="TrmE-type G">
    <location>
        <begin position="211"/>
        <end position="364"/>
    </location>
</feature>
<feature type="binding site" evidence="1">
    <location>
        <position position="20"/>
    </location>
    <ligand>
        <name>(6S)-5-formyl-5,6,7,8-tetrahydrofolate</name>
        <dbReference type="ChEBI" id="CHEBI:57457"/>
    </ligand>
</feature>
<feature type="binding site" evidence="1">
    <location>
        <position position="78"/>
    </location>
    <ligand>
        <name>(6S)-5-formyl-5,6,7,8-tetrahydrofolate</name>
        <dbReference type="ChEBI" id="CHEBI:57457"/>
    </ligand>
</feature>
<feature type="binding site" evidence="1">
    <location>
        <position position="116"/>
    </location>
    <ligand>
        <name>(6S)-5-formyl-5,6,7,8-tetrahydrofolate</name>
        <dbReference type="ChEBI" id="CHEBI:57457"/>
    </ligand>
</feature>
<feature type="binding site" evidence="1">
    <location>
        <begin position="221"/>
        <end position="226"/>
    </location>
    <ligand>
        <name>GTP</name>
        <dbReference type="ChEBI" id="CHEBI:37565"/>
    </ligand>
</feature>
<feature type="binding site" evidence="1">
    <location>
        <position position="225"/>
    </location>
    <ligand>
        <name>Mg(2+)</name>
        <dbReference type="ChEBI" id="CHEBI:18420"/>
    </ligand>
</feature>
<feature type="binding site" evidence="1">
    <location>
        <begin position="240"/>
        <end position="246"/>
    </location>
    <ligand>
        <name>GTP</name>
        <dbReference type="ChEBI" id="CHEBI:37565"/>
    </ligand>
</feature>
<feature type="binding site" evidence="1">
    <location>
        <position position="246"/>
    </location>
    <ligand>
        <name>Mg(2+)</name>
        <dbReference type="ChEBI" id="CHEBI:18420"/>
    </ligand>
</feature>
<feature type="binding site" evidence="1">
    <location>
        <begin position="265"/>
        <end position="268"/>
    </location>
    <ligand>
        <name>GTP</name>
        <dbReference type="ChEBI" id="CHEBI:37565"/>
    </ligand>
</feature>
<feature type="binding site" evidence="1">
    <location>
        <position position="439"/>
    </location>
    <ligand>
        <name>(6S)-5-formyl-5,6,7,8-tetrahydrofolate</name>
        <dbReference type="ChEBI" id="CHEBI:57457"/>
    </ligand>
</feature>
<dbReference type="EC" id="3.6.-.-" evidence="1"/>
<dbReference type="EMBL" id="CR767821">
    <property type="protein sequence ID" value="CAH57749.1"/>
    <property type="molecule type" value="Genomic_DNA"/>
</dbReference>
<dbReference type="EMBL" id="CR925678">
    <property type="protein sequence ID" value="CAI26523.1"/>
    <property type="molecule type" value="Genomic_DNA"/>
</dbReference>
<dbReference type="RefSeq" id="WP_011154723.1">
    <property type="nucleotide sequence ID" value="NC_005295.2"/>
</dbReference>
<dbReference type="SMR" id="Q5HCD7"/>
<dbReference type="GeneID" id="33057890"/>
<dbReference type="KEGG" id="eru:Erum0400"/>
<dbReference type="KEGG" id="erw:ERWE_CDS_00290"/>
<dbReference type="eggNOG" id="COG0486">
    <property type="taxonomic scope" value="Bacteria"/>
</dbReference>
<dbReference type="HOGENOM" id="CLU_019624_3_1_5"/>
<dbReference type="Proteomes" id="UP000001021">
    <property type="component" value="Chromosome"/>
</dbReference>
<dbReference type="GO" id="GO:0005737">
    <property type="term" value="C:cytoplasm"/>
    <property type="evidence" value="ECO:0007669"/>
    <property type="project" value="UniProtKB-SubCell"/>
</dbReference>
<dbReference type="GO" id="GO:0005525">
    <property type="term" value="F:GTP binding"/>
    <property type="evidence" value="ECO:0007669"/>
    <property type="project" value="UniProtKB-UniRule"/>
</dbReference>
<dbReference type="GO" id="GO:0003924">
    <property type="term" value="F:GTPase activity"/>
    <property type="evidence" value="ECO:0007669"/>
    <property type="project" value="UniProtKB-UniRule"/>
</dbReference>
<dbReference type="GO" id="GO:0046872">
    <property type="term" value="F:metal ion binding"/>
    <property type="evidence" value="ECO:0007669"/>
    <property type="project" value="UniProtKB-KW"/>
</dbReference>
<dbReference type="GO" id="GO:0030488">
    <property type="term" value="P:tRNA methylation"/>
    <property type="evidence" value="ECO:0007669"/>
    <property type="project" value="TreeGrafter"/>
</dbReference>
<dbReference type="GO" id="GO:0002098">
    <property type="term" value="P:tRNA wobble uridine modification"/>
    <property type="evidence" value="ECO:0007669"/>
    <property type="project" value="TreeGrafter"/>
</dbReference>
<dbReference type="CDD" id="cd04164">
    <property type="entry name" value="trmE"/>
    <property type="match status" value="1"/>
</dbReference>
<dbReference type="CDD" id="cd14858">
    <property type="entry name" value="TrmE_N"/>
    <property type="match status" value="1"/>
</dbReference>
<dbReference type="Gene3D" id="3.40.50.300">
    <property type="entry name" value="P-loop containing nucleotide triphosphate hydrolases"/>
    <property type="match status" value="1"/>
</dbReference>
<dbReference type="Gene3D" id="3.30.1360.120">
    <property type="entry name" value="Probable tRNA modification gtpase trme, domain 1"/>
    <property type="match status" value="1"/>
</dbReference>
<dbReference type="Gene3D" id="1.20.120.430">
    <property type="entry name" value="tRNA modification GTPase MnmE domain 2"/>
    <property type="match status" value="1"/>
</dbReference>
<dbReference type="HAMAP" id="MF_00379">
    <property type="entry name" value="GTPase_MnmE"/>
    <property type="match status" value="1"/>
</dbReference>
<dbReference type="InterPro" id="IPR031168">
    <property type="entry name" value="G_TrmE"/>
</dbReference>
<dbReference type="InterPro" id="IPR006073">
    <property type="entry name" value="GTP-bd"/>
</dbReference>
<dbReference type="InterPro" id="IPR018948">
    <property type="entry name" value="GTP-bd_TrmE_N"/>
</dbReference>
<dbReference type="InterPro" id="IPR004520">
    <property type="entry name" value="GTPase_MnmE"/>
</dbReference>
<dbReference type="InterPro" id="IPR027368">
    <property type="entry name" value="MnmE_dom2"/>
</dbReference>
<dbReference type="InterPro" id="IPR025867">
    <property type="entry name" value="MnmE_helical"/>
</dbReference>
<dbReference type="InterPro" id="IPR027417">
    <property type="entry name" value="P-loop_NTPase"/>
</dbReference>
<dbReference type="InterPro" id="IPR005225">
    <property type="entry name" value="Small_GTP-bd"/>
</dbReference>
<dbReference type="InterPro" id="IPR027266">
    <property type="entry name" value="TrmE/GcvT_dom1"/>
</dbReference>
<dbReference type="NCBIfam" id="TIGR00450">
    <property type="entry name" value="mnmE_trmE_thdF"/>
    <property type="match status" value="1"/>
</dbReference>
<dbReference type="NCBIfam" id="NF003661">
    <property type="entry name" value="PRK05291.1-3"/>
    <property type="match status" value="1"/>
</dbReference>
<dbReference type="NCBIfam" id="TIGR00231">
    <property type="entry name" value="small_GTP"/>
    <property type="match status" value="1"/>
</dbReference>
<dbReference type="PANTHER" id="PTHR42714">
    <property type="entry name" value="TRNA MODIFICATION GTPASE GTPBP3"/>
    <property type="match status" value="1"/>
</dbReference>
<dbReference type="PANTHER" id="PTHR42714:SF2">
    <property type="entry name" value="TRNA MODIFICATION GTPASE GTPBP3, MITOCHONDRIAL"/>
    <property type="match status" value="1"/>
</dbReference>
<dbReference type="Pfam" id="PF01926">
    <property type="entry name" value="MMR_HSR1"/>
    <property type="match status" value="1"/>
</dbReference>
<dbReference type="Pfam" id="PF12631">
    <property type="entry name" value="MnmE_helical"/>
    <property type="match status" value="1"/>
</dbReference>
<dbReference type="Pfam" id="PF10396">
    <property type="entry name" value="TrmE_N"/>
    <property type="match status" value="1"/>
</dbReference>
<dbReference type="SUPFAM" id="SSF52540">
    <property type="entry name" value="P-loop containing nucleoside triphosphate hydrolases"/>
    <property type="match status" value="1"/>
</dbReference>
<dbReference type="SUPFAM" id="SSF116878">
    <property type="entry name" value="TrmE connector domain"/>
    <property type="match status" value="1"/>
</dbReference>
<dbReference type="PROSITE" id="PS51709">
    <property type="entry name" value="G_TRME"/>
    <property type="match status" value="1"/>
</dbReference>
<sequence length="439" mass="48913">MSTIFALCTPWGKSGVAVIRVSGQDAVKTFMHFKISNAIKPRVATFTPLYNAAHEVIDEVIVVYFSAPNSFTGEDVVELHTHGSIAVIRMILCELGKIFIPAGPGEFSLRAFLNNKVDLTRAEAIVDLINAETEMQAKQAIRQMSGSLEKLYQSWRQQLIDVLSNMEAYIDFPEEVTSSAVENISFLLDKIKESLENHLNDGRKGEILRQGIYVAILGEPNSGKSTLFNHLAKRDIAIVSEYAGTTRDVLETHIDIAGYPIVIIDTAGIRDSNDPVEQEGIRRAKLKAESADFKIIMLPYEKKDALNNEIIDLIDDRSICVLSKSDSIITQNLININNINFIPVSVCCNLGIEHLLSAIQKKVEADFKFCSTSPFITSERQRVHIQNAVNILKNISFELPMELISEDLRLSVRELEKVVGVISNEEILDNVFGKFCIGK</sequence>
<keyword id="KW-0963">Cytoplasm</keyword>
<keyword id="KW-0342">GTP-binding</keyword>
<keyword id="KW-0378">Hydrolase</keyword>
<keyword id="KW-0460">Magnesium</keyword>
<keyword id="KW-0479">Metal-binding</keyword>
<keyword id="KW-0547">Nucleotide-binding</keyword>
<keyword id="KW-0630">Potassium</keyword>
<keyword id="KW-0819">tRNA processing</keyword>
<comment type="function">
    <text evidence="1">Exhibits a very high intrinsic GTPase hydrolysis rate. Involved in the addition of a carboxymethylaminomethyl (cmnm) group at the wobble position (U34) of certain tRNAs, forming tRNA-cmnm(5)s(2)U34.</text>
</comment>
<comment type="cofactor">
    <cofactor evidence="1">
        <name>K(+)</name>
        <dbReference type="ChEBI" id="CHEBI:29103"/>
    </cofactor>
    <text evidence="1">Binds 1 potassium ion per subunit.</text>
</comment>
<comment type="subunit">
    <text evidence="1">Homodimer. Heterotetramer of two MnmE and two MnmG subunits.</text>
</comment>
<comment type="subcellular location">
    <subcellularLocation>
        <location evidence="1">Cytoplasm</location>
    </subcellularLocation>
</comment>
<comment type="similarity">
    <text evidence="1">Belongs to the TRAFAC class TrmE-Era-EngA-EngB-Septin-like GTPase superfamily. TrmE GTPase family.</text>
</comment>